<accession>A7MU79</accession>
<reference key="1">
    <citation type="submission" date="2007-08" db="EMBL/GenBank/DDBJ databases">
        <authorList>
            <consortium name="The Vibrio harveyi Genome Sequencing Project"/>
            <person name="Bassler B."/>
            <person name="Clifton S.W."/>
            <person name="Fulton L."/>
            <person name="Delehaunty K."/>
            <person name="Fronick C."/>
            <person name="Harrison M."/>
            <person name="Markivic C."/>
            <person name="Fulton R."/>
            <person name="Tin-Wollam A.-M."/>
            <person name="Shah N."/>
            <person name="Pepin K."/>
            <person name="Nash W."/>
            <person name="Thiruvilangam P."/>
            <person name="Bhonagiri V."/>
            <person name="Waters C."/>
            <person name="Tu K.C."/>
            <person name="Irgon J."/>
            <person name="Wilson R.K."/>
        </authorList>
    </citation>
    <scope>NUCLEOTIDE SEQUENCE [LARGE SCALE GENOMIC DNA]</scope>
    <source>
        <strain>ATCC BAA-1116 / BB120</strain>
    </source>
</reference>
<name>UBIG_VIBC1</name>
<protein>
    <recommendedName>
        <fullName evidence="1">Ubiquinone biosynthesis O-methyltransferase</fullName>
    </recommendedName>
    <alternativeName>
        <fullName evidence="1">2-polyprenyl-6-hydroxyphenol methylase</fullName>
        <ecNumber evidence="1">2.1.1.222</ecNumber>
    </alternativeName>
    <alternativeName>
        <fullName evidence="1">3-demethylubiquinone 3-O-methyltransferase</fullName>
        <ecNumber evidence="1">2.1.1.64</ecNumber>
    </alternativeName>
</protein>
<proteinExistence type="inferred from homology"/>
<organism>
    <name type="scientific">Vibrio campbellii (strain ATCC BAA-1116)</name>
    <dbReference type="NCBI Taxonomy" id="2902295"/>
    <lineage>
        <taxon>Bacteria</taxon>
        <taxon>Pseudomonadati</taxon>
        <taxon>Pseudomonadota</taxon>
        <taxon>Gammaproteobacteria</taxon>
        <taxon>Vibrionales</taxon>
        <taxon>Vibrionaceae</taxon>
        <taxon>Vibrio</taxon>
    </lineage>
</organism>
<evidence type="ECO:0000255" key="1">
    <source>
        <dbReference type="HAMAP-Rule" id="MF_00472"/>
    </source>
</evidence>
<sequence length="235" mass="26182">MTKAQNVDPSEIKKFEEMASRWWDLEGEFKPLHQINPLRLNYVLEKADGVFGKKVLDVGCGGGILAESMAKEGAVVTGLDMGKEPLEVARLHALEAGTKLTYIQSTIEDHAAENAGTYDVVTCMEMLEHVPDPLSVIRSCAALVKPSGHVFFSTLNRNMKSYLFAIVGAEKLLRIVPEGTHDHEKFIKPAEMMKMIDQTDLTEMGITGLHYNPLNDSYKLGRNVDVNYIVHTTKY</sequence>
<keyword id="KW-0489">Methyltransferase</keyword>
<keyword id="KW-0949">S-adenosyl-L-methionine</keyword>
<keyword id="KW-0808">Transferase</keyword>
<keyword id="KW-0831">Ubiquinone biosynthesis</keyword>
<dbReference type="EC" id="2.1.1.222" evidence="1"/>
<dbReference type="EC" id="2.1.1.64" evidence="1"/>
<dbReference type="EMBL" id="CP000789">
    <property type="protein sequence ID" value="ABU71689.1"/>
    <property type="molecule type" value="Genomic_DNA"/>
</dbReference>
<dbReference type="RefSeq" id="WP_012128326.1">
    <property type="nucleotide sequence ID" value="NC_009783.1"/>
</dbReference>
<dbReference type="SMR" id="A7MU79"/>
<dbReference type="KEGG" id="vha:VIBHAR_02731"/>
<dbReference type="PATRIC" id="fig|338187.25.peg.3441"/>
<dbReference type="UniPathway" id="UPA00232"/>
<dbReference type="Proteomes" id="UP000008152">
    <property type="component" value="Chromosome I"/>
</dbReference>
<dbReference type="GO" id="GO:0102208">
    <property type="term" value="F:2-polyprenyl-6-hydroxyphenol methylase activity"/>
    <property type="evidence" value="ECO:0007669"/>
    <property type="project" value="UniProtKB-EC"/>
</dbReference>
<dbReference type="GO" id="GO:0061542">
    <property type="term" value="F:3-demethylubiquinol 3-O-methyltransferase activity"/>
    <property type="evidence" value="ECO:0007669"/>
    <property type="project" value="UniProtKB-UniRule"/>
</dbReference>
<dbReference type="GO" id="GO:0010420">
    <property type="term" value="F:polyprenyldihydroxybenzoate methyltransferase activity"/>
    <property type="evidence" value="ECO:0007669"/>
    <property type="project" value="InterPro"/>
</dbReference>
<dbReference type="GO" id="GO:0032259">
    <property type="term" value="P:methylation"/>
    <property type="evidence" value="ECO:0007669"/>
    <property type="project" value="UniProtKB-KW"/>
</dbReference>
<dbReference type="CDD" id="cd02440">
    <property type="entry name" value="AdoMet_MTases"/>
    <property type="match status" value="1"/>
</dbReference>
<dbReference type="FunFam" id="3.40.50.150:FF:000028">
    <property type="entry name" value="Ubiquinone biosynthesis O-methyltransferase"/>
    <property type="match status" value="1"/>
</dbReference>
<dbReference type="Gene3D" id="3.40.50.150">
    <property type="entry name" value="Vaccinia Virus protein VP39"/>
    <property type="match status" value="1"/>
</dbReference>
<dbReference type="HAMAP" id="MF_00472">
    <property type="entry name" value="UbiG"/>
    <property type="match status" value="1"/>
</dbReference>
<dbReference type="InterPro" id="IPR029063">
    <property type="entry name" value="SAM-dependent_MTases_sf"/>
</dbReference>
<dbReference type="InterPro" id="IPR010233">
    <property type="entry name" value="UbiG_MeTrfase"/>
</dbReference>
<dbReference type="NCBIfam" id="TIGR01983">
    <property type="entry name" value="UbiG"/>
    <property type="match status" value="1"/>
</dbReference>
<dbReference type="PANTHER" id="PTHR43464">
    <property type="entry name" value="METHYLTRANSFERASE"/>
    <property type="match status" value="1"/>
</dbReference>
<dbReference type="PANTHER" id="PTHR43464:SF19">
    <property type="entry name" value="UBIQUINONE BIOSYNTHESIS O-METHYLTRANSFERASE, MITOCHONDRIAL"/>
    <property type="match status" value="1"/>
</dbReference>
<dbReference type="Pfam" id="PF13489">
    <property type="entry name" value="Methyltransf_23"/>
    <property type="match status" value="1"/>
</dbReference>
<dbReference type="SUPFAM" id="SSF53335">
    <property type="entry name" value="S-adenosyl-L-methionine-dependent methyltransferases"/>
    <property type="match status" value="1"/>
</dbReference>
<feature type="chain" id="PRO_1000013931" description="Ubiquinone biosynthesis O-methyltransferase">
    <location>
        <begin position="1"/>
        <end position="235"/>
    </location>
</feature>
<feature type="binding site" evidence="1">
    <location>
        <position position="39"/>
    </location>
    <ligand>
        <name>S-adenosyl-L-methionine</name>
        <dbReference type="ChEBI" id="CHEBI:59789"/>
    </ligand>
</feature>
<feature type="binding site" evidence="1">
    <location>
        <position position="59"/>
    </location>
    <ligand>
        <name>S-adenosyl-L-methionine</name>
        <dbReference type="ChEBI" id="CHEBI:59789"/>
    </ligand>
</feature>
<feature type="binding site" evidence="1">
    <location>
        <position position="80"/>
    </location>
    <ligand>
        <name>S-adenosyl-L-methionine</name>
        <dbReference type="ChEBI" id="CHEBI:59789"/>
    </ligand>
</feature>
<feature type="binding site" evidence="1">
    <location>
        <position position="124"/>
    </location>
    <ligand>
        <name>S-adenosyl-L-methionine</name>
        <dbReference type="ChEBI" id="CHEBI:59789"/>
    </ligand>
</feature>
<comment type="function">
    <text evidence="1">O-methyltransferase that catalyzes the 2 O-methylation steps in the ubiquinone biosynthetic pathway.</text>
</comment>
<comment type="catalytic activity">
    <reaction evidence="1">
        <text>a 3-demethylubiquinol + S-adenosyl-L-methionine = a ubiquinol + S-adenosyl-L-homocysteine + H(+)</text>
        <dbReference type="Rhea" id="RHEA:44380"/>
        <dbReference type="Rhea" id="RHEA-COMP:9566"/>
        <dbReference type="Rhea" id="RHEA-COMP:10914"/>
        <dbReference type="ChEBI" id="CHEBI:15378"/>
        <dbReference type="ChEBI" id="CHEBI:17976"/>
        <dbReference type="ChEBI" id="CHEBI:57856"/>
        <dbReference type="ChEBI" id="CHEBI:59789"/>
        <dbReference type="ChEBI" id="CHEBI:84422"/>
        <dbReference type="EC" id="2.1.1.64"/>
    </reaction>
</comment>
<comment type="catalytic activity">
    <reaction evidence="1">
        <text>a 3-(all-trans-polyprenyl)benzene-1,2-diol + S-adenosyl-L-methionine = a 2-methoxy-6-(all-trans-polyprenyl)phenol + S-adenosyl-L-homocysteine + H(+)</text>
        <dbReference type="Rhea" id="RHEA:31411"/>
        <dbReference type="Rhea" id="RHEA-COMP:9550"/>
        <dbReference type="Rhea" id="RHEA-COMP:9551"/>
        <dbReference type="ChEBI" id="CHEBI:15378"/>
        <dbReference type="ChEBI" id="CHEBI:57856"/>
        <dbReference type="ChEBI" id="CHEBI:59789"/>
        <dbReference type="ChEBI" id="CHEBI:62729"/>
        <dbReference type="ChEBI" id="CHEBI:62731"/>
        <dbReference type="EC" id="2.1.1.222"/>
    </reaction>
</comment>
<comment type="pathway">
    <text evidence="1">Cofactor biosynthesis; ubiquinone biosynthesis.</text>
</comment>
<comment type="similarity">
    <text evidence="1">Belongs to the methyltransferase superfamily. UbiG/COQ3 family.</text>
</comment>
<gene>
    <name evidence="1" type="primary">ubiG</name>
    <name type="ordered locus">VIBHAR_02731</name>
</gene>